<comment type="function">
    <text evidence="3 6 7 8 9 16 17 18">Component of N-methyl-D-aspartate (NMDA) receptors (NMDARs) that function as heterotetrameric, ligand-gated cation channels with high calcium permeability and voltage-dependent block by Mg(2+) (PubMed:12008020, PubMed:12860921, PubMed:14602821, PubMed:1532151, PubMed:8060614, PubMed:9049108). NMDARs participate in synaptic plasticity for learning and memory formation by contributing to the long-term potentiation (LTP) (By similarity). Channel activation requires binding of the neurotransmitter L-glutamate to the GluN2 subunit, glycine or D-serine binding to the GluN1 subunit, plus membrane depolarization to eliminate channel inhibition by Mg(2+) (PubMed:12008020, PubMed:1532151, PubMed:7790891, PubMed:8060614). NMDARs mediate simultaneously the potasium efflux and the influx of calcium and sodium (PubMed:12860921). Each GluN2 or GluN3 subunit confers differential attributes to channel properties, including activation, deactivation and desensitization kinetics, pH sensitivity, Ca2(+) permeability, and binding to allosteric modulators (PubMed:12008020, PubMed:14602821).</text>
</comment>
<comment type="catalytic activity">
    <reaction evidence="6 7 8 9 17 18">
        <text>Ca(2+)(in) = Ca(2+)(out)</text>
        <dbReference type="Rhea" id="RHEA:29671"/>
        <dbReference type="ChEBI" id="CHEBI:29108"/>
    </reaction>
</comment>
<comment type="catalytic activity">
    <reaction evidence="7 18">
        <text>Na(+)(in) = Na(+)(out)</text>
        <dbReference type="Rhea" id="RHEA:34963"/>
        <dbReference type="ChEBI" id="CHEBI:29101"/>
    </reaction>
</comment>
<comment type="catalytic activity">
    <reaction evidence="7">
        <text>K(+)(in) = K(+)(out)</text>
        <dbReference type="Rhea" id="RHEA:29463"/>
        <dbReference type="ChEBI" id="CHEBI:29103"/>
    </reaction>
</comment>
<comment type="subunit">
    <text evidence="2 3 6 8 10 13">Heterotetramer; the NMDAR subunits are modular and harbor tiered domains that function in concert to regulate opening and closing of the cation-selective ion channel pore (PubMed:12008020, PubMed:14602821). Forms heterotetrameric channels composed of two GluN1/zeta subunits (GRIN1), and two identical GluN2/epsilon subunits (GRIN2A, GRIN2B, GRIN2C or GRIN2D) or GluN3 subunits (GRIN3A or GRIN3B) (in vitro) (PubMed:12008020, PubMed:14602821). Can also form heterotetrameric channels that contain at least two GluN1 subunits and at least two different GluN2 subunits (or a combination of one GluN2 and one GluN3 subunits) (in vitro) (PubMed:12008020, PubMed:14602821). In vivo, the subunit composition may vary in function of the expression levels of the different subunits (By similarity). Found in a complex with GRIN2A or GRIN2B, GRIN3A and PPP2CB (By similarity). Found in a complex with GRIN2A or GRIN2B and GRIN3B (By similarity). Interacts with SNX27 (via PDZ domain); the interaction is required for recycling to the plasma membrane when endocytosed and prevent degradation in lysosomes (PubMed:23524343). Interacts with DLG4 and MPDZ. Interacts with LRFN1 and LRFN2 (By similarity). Interacts with MYZAP (PubMed:18849881). Found in a complex with DLG4 and PRR7 (By similarity). Found in a complex with GRIN2B and PRR7. Interacts with PRR7; the interaction is reduced following NMDA receptor activity (By similarity).</text>
</comment>
<comment type="interaction">
    <interactant intactId="EBI-400084">
        <id>P35438</id>
    </interactant>
    <interactant intactId="EBI-300895">
        <id>Q62108</id>
        <label>Dlg4</label>
    </interactant>
    <organismsDiffer>false</organismsDiffer>
    <experiments>13</experiments>
</comment>
<comment type="interaction">
    <interactant intactId="EBI-400084">
        <id>P35438</id>
    </interactant>
    <interactant intactId="EBI-400125">
        <id>Q01097</id>
        <label>Grin2b</label>
    </interactant>
    <organismsDiffer>false</organismsDiffer>
    <experiments>11</experiments>
</comment>
<comment type="interaction">
    <interactant intactId="EBI-400084">
        <id>P35438</id>
    </interactant>
    <interactant intactId="EBI-432319">
        <id>Q924X6</id>
        <label>Lrp8</label>
    </interactant>
    <organismsDiffer>false</organismsDiffer>
    <experiments>4</experiments>
</comment>
<comment type="interaction">
    <interactant intactId="EBI-400084">
        <id>P35438</id>
    </interactant>
    <interactant intactId="EBI-990067">
        <id>P49769</id>
        <label>Psen1</label>
    </interactant>
    <organismsDiffer>false</organismsDiffer>
    <experiments>3</experiments>
</comment>
<comment type="subcellular location">
    <subcellularLocation>
        <location evidence="6 9 17">Cell membrane</location>
        <topology evidence="2">Multi-pass membrane protein</topology>
    </subcellularLocation>
    <subcellularLocation>
        <location evidence="15">Postsynaptic cell membrane</location>
    </subcellularLocation>
    <subcellularLocation>
        <location evidence="2">Postsynaptic density membrane</location>
    </subcellularLocation>
    <subcellularLocation>
        <location evidence="14 15">Synaptic cell membrane</location>
    </subcellularLocation>
    <text evidence="2 14">Synaptic cell membrane targeting is dependent of GRIN2B/GluN2B subunit (PubMed:26041915). Association with GRIN3A occurs in the endoplasmic reticulum (By similarity).</text>
</comment>
<comment type="alternative products">
    <event type="alternative splicing"/>
    <isoform>
        <id>P35438-1</id>
        <name>1</name>
        <sequence type="displayed"/>
    </isoform>
    <isoform>
        <id>P35438-2</id>
        <name>2</name>
        <sequence type="described" ref="VSP_014222 VSP_014223"/>
    </isoform>
</comment>
<comment type="tissue specificity">
    <text evidence="17">Detected in brain (at protein level). Detected in brain.</text>
</comment>
<comment type="domain">
    <text evidence="1">A hydrophobic region that gives rise to the prediction of a transmembrane span does not cross the membrane, but is part of a discontinuously helical region that dips into the membrane and is probably part of the pore and of the selectivity filter.</text>
</comment>
<comment type="domain">
    <text evidence="3">The extracellular N-terminal domain (NTD) is a site of allosteric regulation to modulate overall receptor function.</text>
</comment>
<comment type="domain">
    <text evidence="3">The ligand-binding domain (LBD) binds to glycine (GluN1 and GluN3 subunits) and glutamate (GluN2 subunits) and control opening of the channel gate.</text>
</comment>
<comment type="domain">
    <text evidence="3">The transmembrane domain (TMD) harbors the channel gate and pore.</text>
</comment>
<comment type="PTM">
    <text evidence="3">NMDA is probably regulated by C-terminal phosphorylation of an isoform of GRIN1 by PKC. Dephosphorylated on Ser-897 probably by protein phosphatase 2A (PPP2CB). Its phosphorylated state is influenced by the formation of the NMDAR-PPP2CB complex and the NMDAR channel activity.</text>
</comment>
<comment type="disruption phenotype">
    <text evidence="17">Mutant mice are born at the expected Mendelian rate, appear grossly normal and have apparently normal brain structure, but the pups do not feed and all die during the first day after birth. Cerebellum granule cells and hippocampus pyramidal neurons from mutants lack NMDA-induced Ca(2+)influx and membrane currents, contrary to wild-type.</text>
</comment>
<comment type="similarity">
    <text evidence="20">Belongs to the glutamate-gated ion channel (TC 1.A.10.1) family. NR1/GRIN1 subfamily.</text>
</comment>
<organism>
    <name type="scientific">Mus musculus</name>
    <name type="common">Mouse</name>
    <dbReference type="NCBI Taxonomy" id="10090"/>
    <lineage>
        <taxon>Eukaryota</taxon>
        <taxon>Metazoa</taxon>
        <taxon>Chordata</taxon>
        <taxon>Craniata</taxon>
        <taxon>Vertebrata</taxon>
        <taxon>Euteleostomi</taxon>
        <taxon>Mammalia</taxon>
        <taxon>Eutheria</taxon>
        <taxon>Euarchontoglires</taxon>
        <taxon>Glires</taxon>
        <taxon>Rodentia</taxon>
        <taxon>Myomorpha</taxon>
        <taxon>Muroidea</taxon>
        <taxon>Muridae</taxon>
        <taxon>Murinae</taxon>
        <taxon>Mus</taxon>
        <taxon>Mus</taxon>
    </lineage>
</organism>
<feature type="signal peptide" evidence="4">
    <location>
        <begin position="1"/>
        <end position="18"/>
    </location>
</feature>
<feature type="chain" id="PRO_0000011588" description="Glutamate receptor ionotropic, NMDA 1">
    <location>
        <begin position="19"/>
        <end position="938"/>
    </location>
</feature>
<feature type="topological domain" description="Extracellular" evidence="2">
    <location>
        <begin position="19"/>
        <end position="559"/>
    </location>
</feature>
<feature type="transmembrane region" description="Helical" evidence="2">
    <location>
        <begin position="560"/>
        <end position="580"/>
    </location>
</feature>
<feature type="topological domain" description="Cytoplasmic" evidence="2">
    <location>
        <begin position="581"/>
        <end position="602"/>
    </location>
</feature>
<feature type="intramembrane region" description="Discontinuously helical" evidence="1">
    <location>
        <begin position="603"/>
        <end position="624"/>
    </location>
</feature>
<feature type="topological domain" description="Cytoplasmic" evidence="2">
    <location>
        <begin position="625"/>
        <end position="630"/>
    </location>
</feature>
<feature type="transmembrane region" description="Helical" evidence="2">
    <location>
        <begin position="631"/>
        <end position="647"/>
    </location>
</feature>
<feature type="topological domain" description="Extracellular" evidence="2">
    <location>
        <begin position="648"/>
        <end position="812"/>
    </location>
</feature>
<feature type="transmembrane region" description="Helical" evidence="2">
    <location>
        <begin position="813"/>
        <end position="833"/>
    </location>
</feature>
<feature type="topological domain" description="Cytoplasmic" evidence="2">
    <location>
        <begin position="834"/>
        <end position="938"/>
    </location>
</feature>
<feature type="region of interest" description="Pore-forming" evidence="1">
    <location>
        <begin position="603"/>
        <end position="624"/>
    </location>
</feature>
<feature type="region of interest" description="Disordered" evidence="5">
    <location>
        <begin position="889"/>
        <end position="938"/>
    </location>
</feature>
<feature type="compositionally biased region" description="Basic and acidic residues" evidence="5">
    <location>
        <begin position="916"/>
        <end position="927"/>
    </location>
</feature>
<feature type="binding site" evidence="2">
    <location>
        <position position="516"/>
    </location>
    <ligand>
        <name>glycine</name>
        <dbReference type="ChEBI" id="CHEBI:57305"/>
    </ligand>
</feature>
<feature type="binding site" evidence="2">
    <location>
        <position position="518"/>
    </location>
    <ligand>
        <name>glycine</name>
        <dbReference type="ChEBI" id="CHEBI:57305"/>
    </ligand>
</feature>
<feature type="binding site" evidence="2">
    <location>
        <position position="523"/>
    </location>
    <ligand>
        <name>glycine</name>
        <dbReference type="ChEBI" id="CHEBI:57305"/>
    </ligand>
</feature>
<feature type="binding site" evidence="2">
    <location>
        <position position="688"/>
    </location>
    <ligand>
        <name>glycine</name>
        <dbReference type="ChEBI" id="CHEBI:57305"/>
    </ligand>
</feature>
<feature type="binding site" evidence="2">
    <location>
        <position position="732"/>
    </location>
    <ligand>
        <name>glycine</name>
        <dbReference type="ChEBI" id="CHEBI:57305"/>
    </ligand>
</feature>
<feature type="modified residue" description="Phosphoserine; by PKC" evidence="3">
    <location>
        <position position="889"/>
    </location>
</feature>
<feature type="modified residue" description="Phosphoserine" evidence="3">
    <location>
        <position position="890"/>
    </location>
</feature>
<feature type="modified residue" description="Phosphoserine; by PKC" evidence="3">
    <location>
        <position position="896"/>
    </location>
</feature>
<feature type="modified residue" description="Phosphoserine; by PKC" evidence="3">
    <location>
        <position position="897"/>
    </location>
</feature>
<feature type="glycosylation site" description="N-linked (GlcNAc...) asparagine" evidence="4">
    <location>
        <position position="61"/>
    </location>
</feature>
<feature type="glycosylation site" description="N-linked (GlcNAc...) asparagine" evidence="4">
    <location>
        <position position="203"/>
    </location>
</feature>
<feature type="glycosylation site" description="N-linked (GlcNAc...) asparagine" evidence="4">
    <location>
        <position position="239"/>
    </location>
</feature>
<feature type="glycosylation site" description="N-linked (GlcNAc...) asparagine" evidence="4">
    <location>
        <position position="276"/>
    </location>
</feature>
<feature type="glycosylation site" description="N-linked (GlcNAc...) asparagine" evidence="4">
    <location>
        <position position="300"/>
    </location>
</feature>
<feature type="glycosylation site" description="N-linked (GlcNAc...) asparagine" evidence="4">
    <location>
        <position position="350"/>
    </location>
</feature>
<feature type="glycosylation site" description="N-linked (GlcNAc...) asparagine" evidence="4">
    <location>
        <position position="368"/>
    </location>
</feature>
<feature type="glycosylation site" description="N-linked (GlcNAc...) asparagine" evidence="4">
    <location>
        <position position="440"/>
    </location>
</feature>
<feature type="glycosylation site" description="N-linked (GlcNAc...) asparagine" evidence="4">
    <location>
        <position position="471"/>
    </location>
</feature>
<feature type="glycosylation site" description="N-linked (GlcNAc...) asparagine" evidence="4">
    <location>
        <position position="491"/>
    </location>
</feature>
<feature type="glycosylation site" description="N-linked (GlcNAc...) asparagine" evidence="4">
    <location>
        <position position="674"/>
    </location>
</feature>
<feature type="glycosylation site" description="N-linked (GlcNAc...) asparagine" evidence="4">
    <location>
        <position position="771"/>
    </location>
</feature>
<feature type="disulfide bond" evidence="2">
    <location>
        <begin position="79"/>
        <end position="308"/>
    </location>
</feature>
<feature type="disulfide bond" evidence="2">
    <location>
        <begin position="420"/>
        <end position="454"/>
    </location>
</feature>
<feature type="disulfide bond" evidence="2">
    <location>
        <begin position="436"/>
        <end position="455"/>
    </location>
</feature>
<feature type="disulfide bond" evidence="2">
    <location>
        <begin position="744"/>
        <end position="798"/>
    </location>
</feature>
<feature type="splice variant" id="VSP_014222" description="In isoform 2." evidence="19">
    <original>DRKSGRAEPDPKKKATFRAITS</original>
    <variation>QYHPTDITGPLNLSDPSVSTVV</variation>
    <location>
        <begin position="864"/>
        <end position="885"/>
    </location>
</feature>
<feature type="splice variant" id="VSP_014223" description="In isoform 2." evidence="19">
    <location>
        <begin position="886"/>
        <end position="938"/>
    </location>
</feature>
<feature type="sequence variant">
    <original>R</original>
    <variation>T</variation>
    <location>
        <position position="936"/>
    </location>
</feature>
<feature type="mutagenesis site" description="Mutant mice exhibit a decrease in anxiety-like behaviors; the effect is mitigated by administration of D-serine or the glycine transporter inhibitor ALX-5407. They also exhibit deficits in social approach, information processing, performance in the Morris water maze, and enhanced startle reactivity. The effects are partially reversed; when associated with 'R-181' in Dao." evidence="11 12">
    <original>D</original>
    <variation>N</variation>
    <location>
        <position position="481"/>
    </location>
</feature>
<gene>
    <name evidence="21" type="primary">Grin1</name>
    <name type="synonym">Glurz1</name>
</gene>
<name>NMDZ1_MOUSE</name>
<dbReference type="EMBL" id="D10028">
    <property type="protein sequence ID" value="BAA00920.1"/>
    <property type="molecule type" value="mRNA"/>
</dbReference>
<dbReference type="EMBL" id="AL732309">
    <property type="status" value="NOT_ANNOTATED_CDS"/>
    <property type="molecule type" value="Genomic_DNA"/>
</dbReference>
<dbReference type="EMBL" id="BC039157">
    <property type="protein sequence ID" value="AAH39157.1"/>
    <property type="molecule type" value="mRNA"/>
</dbReference>
<dbReference type="CCDS" id="CCDS15764.1">
    <molecule id="P35438-1"/>
</dbReference>
<dbReference type="CCDS" id="CCDS50528.1">
    <molecule id="P35438-2"/>
</dbReference>
<dbReference type="PIR" id="S21104">
    <property type="entry name" value="S21104"/>
</dbReference>
<dbReference type="RefSeq" id="NP_001171127.1">
    <property type="nucleotide sequence ID" value="NM_001177656.2"/>
</dbReference>
<dbReference type="RefSeq" id="NP_001171128.1">
    <molecule id="P35438-2"/>
    <property type="nucleotide sequence ID" value="NM_001177657.2"/>
</dbReference>
<dbReference type="RefSeq" id="NP_032195.1">
    <molecule id="P35438-1"/>
    <property type="nucleotide sequence ID" value="NM_008169.3"/>
</dbReference>
<dbReference type="PDB" id="9DA9">
    <property type="method" value="X-ray"/>
    <property type="resolution" value="2.05 A"/>
    <property type="chains" value="A=394-800"/>
</dbReference>
<dbReference type="PDBsum" id="9DA9"/>
<dbReference type="SMR" id="P35438"/>
<dbReference type="BioGRID" id="200067">
    <property type="interactions" value="94"/>
</dbReference>
<dbReference type="ComplexPortal" id="CPX-290">
    <property type="entry name" value="NMDA receptor complex, GluN1-GluN2A"/>
</dbReference>
<dbReference type="ComplexPortal" id="CPX-291">
    <property type="entry name" value="NMDA receptor complex, GluN1-GluN2B"/>
</dbReference>
<dbReference type="ComplexPortal" id="CPX-292">
    <property type="entry name" value="NMDA receptor complex, GluN1-GluN2C"/>
</dbReference>
<dbReference type="ComplexPortal" id="CPX-293">
    <property type="entry name" value="NMDA receptor complex, GluN1-GluN2D"/>
</dbReference>
<dbReference type="ComplexPortal" id="CPX-296">
    <property type="entry name" value="NMDA receptor complex, GluN1-GluN2A-GluN2B"/>
</dbReference>
<dbReference type="CORUM" id="P35438"/>
<dbReference type="DIP" id="DIP-31577N"/>
<dbReference type="FunCoup" id="P35438">
    <property type="interactions" value="1405"/>
</dbReference>
<dbReference type="IntAct" id="P35438">
    <property type="interactions" value="73"/>
</dbReference>
<dbReference type="MINT" id="P35438"/>
<dbReference type="STRING" id="10090.ENSMUSP00000028335"/>
<dbReference type="ChEMBL" id="CHEMBL3885583"/>
<dbReference type="GlyConnect" id="2349">
    <property type="glycosylation" value="14 N-Linked glycans (9 sites)"/>
</dbReference>
<dbReference type="GlyCosmos" id="P35438">
    <property type="glycosylation" value="12 sites, 13 glycans"/>
</dbReference>
<dbReference type="GlyGen" id="P35438">
    <property type="glycosylation" value="13 sites, 19 N-linked glycans (11 sites), 1 O-linked glycan (1 site)"/>
</dbReference>
<dbReference type="iPTMnet" id="P35438"/>
<dbReference type="PhosphoSitePlus" id="P35438"/>
<dbReference type="SwissPalm" id="P35438"/>
<dbReference type="jPOST" id="P35438"/>
<dbReference type="PaxDb" id="10090-ENSMUSP00000028335"/>
<dbReference type="PeptideAtlas" id="P35438"/>
<dbReference type="ProteomicsDB" id="293691">
    <molecule id="P35438-1"/>
</dbReference>
<dbReference type="ProteomicsDB" id="293692">
    <molecule id="P35438-2"/>
</dbReference>
<dbReference type="ABCD" id="P35438">
    <property type="antibodies" value="8 sequenced antibodies"/>
</dbReference>
<dbReference type="Antibodypedia" id="3475">
    <property type="antibodies" value="1279 antibodies from 49 providers"/>
</dbReference>
<dbReference type="DNASU" id="14810"/>
<dbReference type="Ensembl" id="ENSMUST00000028335.13">
    <molecule id="P35438-1"/>
    <property type="protein sequence ID" value="ENSMUSP00000028335.7"/>
    <property type="gene ID" value="ENSMUSG00000026959.14"/>
</dbReference>
<dbReference type="Ensembl" id="ENSMUST00000114312.2">
    <molecule id="P35438-2"/>
    <property type="protein sequence ID" value="ENSMUSP00000109951.2"/>
    <property type="gene ID" value="ENSMUSG00000026959.14"/>
</dbReference>
<dbReference type="GeneID" id="14810"/>
<dbReference type="KEGG" id="mmu:14810"/>
<dbReference type="UCSC" id="uc008iri.3">
    <molecule id="P35438-2"/>
    <property type="organism name" value="mouse"/>
</dbReference>
<dbReference type="UCSC" id="uc008irk.3">
    <molecule id="P35438-1"/>
    <property type="organism name" value="mouse"/>
</dbReference>
<dbReference type="AGR" id="MGI:95819"/>
<dbReference type="CTD" id="2902"/>
<dbReference type="MGI" id="MGI:95819">
    <property type="gene designation" value="Grin1"/>
</dbReference>
<dbReference type="VEuPathDB" id="HostDB:ENSMUSG00000026959"/>
<dbReference type="eggNOG" id="KOG4440">
    <property type="taxonomic scope" value="Eukaryota"/>
</dbReference>
<dbReference type="GeneTree" id="ENSGT00940000158016"/>
<dbReference type="HOGENOM" id="CLU_007257_2_0_1"/>
<dbReference type="InParanoid" id="P35438"/>
<dbReference type="TreeFam" id="TF351405"/>
<dbReference type="Reactome" id="R-MMU-3928662">
    <property type="pathway name" value="EPHB-mediated forward signaling"/>
</dbReference>
<dbReference type="Reactome" id="R-MMU-438066">
    <property type="pathway name" value="Unblocking of NMDA receptors, glutamate binding and activation"/>
</dbReference>
<dbReference type="Reactome" id="R-MMU-5673001">
    <property type="pathway name" value="RAF/MAP kinase cascade"/>
</dbReference>
<dbReference type="Reactome" id="R-MMU-8849932">
    <property type="pathway name" value="Synaptic adhesion-like molecules"/>
</dbReference>
<dbReference type="Reactome" id="R-MMU-9609736">
    <property type="pathway name" value="Assembly and cell surface presentation of NMDA receptors"/>
</dbReference>
<dbReference type="BioGRID-ORCS" id="14810">
    <property type="hits" value="1 hit in 80 CRISPR screens"/>
</dbReference>
<dbReference type="CD-CODE" id="CE726F99">
    <property type="entry name" value="Postsynaptic density"/>
</dbReference>
<dbReference type="ChiTaRS" id="Grin1">
    <property type="organism name" value="mouse"/>
</dbReference>
<dbReference type="PRO" id="PR:P35438"/>
<dbReference type="Proteomes" id="UP000000589">
    <property type="component" value="Chromosome 2"/>
</dbReference>
<dbReference type="RNAct" id="P35438">
    <property type="molecule type" value="protein"/>
</dbReference>
<dbReference type="Bgee" id="ENSMUSG00000026959">
    <property type="expression patterns" value="Expressed in perirhinal cortex and 119 other cell types or tissues"/>
</dbReference>
<dbReference type="ExpressionAtlas" id="P35438">
    <property type="expression patterns" value="baseline and differential"/>
</dbReference>
<dbReference type="GO" id="GO:0009986">
    <property type="term" value="C:cell surface"/>
    <property type="evidence" value="ECO:0000314"/>
    <property type="project" value="BHF-UCL"/>
</dbReference>
<dbReference type="GO" id="GO:0005737">
    <property type="term" value="C:cytoplasm"/>
    <property type="evidence" value="ECO:0000314"/>
    <property type="project" value="MGI"/>
</dbReference>
<dbReference type="GO" id="GO:0030425">
    <property type="term" value="C:dendrite"/>
    <property type="evidence" value="ECO:0000314"/>
    <property type="project" value="MGI"/>
</dbReference>
<dbReference type="GO" id="GO:0043197">
    <property type="term" value="C:dendritic spine"/>
    <property type="evidence" value="ECO:0000314"/>
    <property type="project" value="MGI"/>
</dbReference>
<dbReference type="GO" id="GO:0005783">
    <property type="term" value="C:endoplasmic reticulum"/>
    <property type="evidence" value="ECO:0000314"/>
    <property type="project" value="MGI"/>
</dbReference>
<dbReference type="GO" id="GO:0005789">
    <property type="term" value="C:endoplasmic reticulum membrane"/>
    <property type="evidence" value="ECO:0000304"/>
    <property type="project" value="Reactome"/>
</dbReference>
<dbReference type="GO" id="GO:0098978">
    <property type="term" value="C:glutamatergic synapse"/>
    <property type="evidence" value="ECO:0000314"/>
    <property type="project" value="SynGO"/>
</dbReference>
<dbReference type="GO" id="GO:0030426">
    <property type="term" value="C:growth cone"/>
    <property type="evidence" value="ECO:0000303"/>
    <property type="project" value="UniProtKB"/>
</dbReference>
<dbReference type="GO" id="GO:0016020">
    <property type="term" value="C:membrane"/>
    <property type="evidence" value="ECO:0000314"/>
    <property type="project" value="MGI"/>
</dbReference>
<dbReference type="GO" id="GO:0098878">
    <property type="term" value="C:neurotransmitter receptor complex"/>
    <property type="evidence" value="ECO:0000353"/>
    <property type="project" value="UniProtKB"/>
</dbReference>
<dbReference type="GO" id="GO:0017146">
    <property type="term" value="C:NMDA selective glutamate receptor complex"/>
    <property type="evidence" value="ECO:0000353"/>
    <property type="project" value="MGI"/>
</dbReference>
<dbReference type="GO" id="GO:0005886">
    <property type="term" value="C:plasma membrane"/>
    <property type="evidence" value="ECO:0000314"/>
    <property type="project" value="UniProtKB"/>
</dbReference>
<dbReference type="GO" id="GO:0014069">
    <property type="term" value="C:postsynaptic density"/>
    <property type="evidence" value="ECO:0000314"/>
    <property type="project" value="MGI"/>
</dbReference>
<dbReference type="GO" id="GO:0098839">
    <property type="term" value="C:postsynaptic density membrane"/>
    <property type="evidence" value="ECO:0000314"/>
    <property type="project" value="SynGO"/>
</dbReference>
<dbReference type="GO" id="GO:0045211">
    <property type="term" value="C:postsynaptic membrane"/>
    <property type="evidence" value="ECO:0000314"/>
    <property type="project" value="UniProtKB"/>
</dbReference>
<dbReference type="GO" id="GO:0045202">
    <property type="term" value="C:synapse"/>
    <property type="evidence" value="ECO:0000314"/>
    <property type="project" value="MGI"/>
</dbReference>
<dbReference type="GO" id="GO:0097060">
    <property type="term" value="C:synaptic membrane"/>
    <property type="evidence" value="ECO:0000314"/>
    <property type="project" value="UniProtKB"/>
</dbReference>
<dbReference type="GO" id="GO:0008021">
    <property type="term" value="C:synaptic vesicle"/>
    <property type="evidence" value="ECO:0000314"/>
    <property type="project" value="MGI"/>
</dbReference>
<dbReference type="GO" id="GO:0030672">
    <property type="term" value="C:synaptic vesicle membrane"/>
    <property type="evidence" value="ECO:0000314"/>
    <property type="project" value="MGI"/>
</dbReference>
<dbReference type="GO" id="GO:0030658">
    <property type="term" value="C:transport vesicle membrane"/>
    <property type="evidence" value="ECO:0000304"/>
    <property type="project" value="Reactome"/>
</dbReference>
<dbReference type="GO" id="GO:0005262">
    <property type="term" value="F:calcium channel activity"/>
    <property type="evidence" value="ECO:0000314"/>
    <property type="project" value="MGI"/>
</dbReference>
<dbReference type="GO" id="GO:0005509">
    <property type="term" value="F:calcium ion binding"/>
    <property type="evidence" value="ECO:0000314"/>
    <property type="project" value="MGI"/>
</dbReference>
<dbReference type="GO" id="GO:0005516">
    <property type="term" value="F:calmodulin binding"/>
    <property type="evidence" value="ECO:0000314"/>
    <property type="project" value="MGI"/>
</dbReference>
<dbReference type="GO" id="GO:0022849">
    <property type="term" value="F:glutamate-gated calcium ion channel activity"/>
    <property type="evidence" value="ECO:0000250"/>
    <property type="project" value="UniProtKB"/>
</dbReference>
<dbReference type="GO" id="GO:0016594">
    <property type="term" value="F:glycine binding"/>
    <property type="evidence" value="ECO:0000315"/>
    <property type="project" value="UniProtKB"/>
</dbReference>
<dbReference type="GO" id="GO:0015280">
    <property type="term" value="F:ligand-gated sodium channel activity"/>
    <property type="evidence" value="ECO:0000250"/>
    <property type="project" value="UniProtKB"/>
</dbReference>
<dbReference type="GO" id="GO:0005261">
    <property type="term" value="F:monoatomic cation channel activity"/>
    <property type="evidence" value="ECO:0000316"/>
    <property type="project" value="MGI"/>
</dbReference>
<dbReference type="GO" id="GO:0004972">
    <property type="term" value="F:NMDA glutamate receptor activity"/>
    <property type="evidence" value="ECO:0000314"/>
    <property type="project" value="MGI"/>
</dbReference>
<dbReference type="GO" id="GO:0005102">
    <property type="term" value="F:signaling receptor binding"/>
    <property type="evidence" value="ECO:0000353"/>
    <property type="project" value="MGI"/>
</dbReference>
<dbReference type="GO" id="GO:0008344">
    <property type="term" value="P:adult locomotory behavior"/>
    <property type="evidence" value="ECO:0000315"/>
    <property type="project" value="MGI"/>
</dbReference>
<dbReference type="GO" id="GO:0008306">
    <property type="term" value="P:associative learning"/>
    <property type="evidence" value="ECO:0000315"/>
    <property type="project" value="MGI"/>
</dbReference>
<dbReference type="GO" id="GO:0055074">
    <property type="term" value="P:calcium ion homeostasis"/>
    <property type="evidence" value="ECO:0000314"/>
    <property type="project" value="MGI"/>
</dbReference>
<dbReference type="GO" id="GO:0070588">
    <property type="term" value="P:calcium ion transmembrane transport"/>
    <property type="evidence" value="ECO:0000314"/>
    <property type="project" value="UniProtKB"/>
</dbReference>
<dbReference type="GO" id="GO:0006816">
    <property type="term" value="P:calcium ion transport"/>
    <property type="evidence" value="ECO:0000314"/>
    <property type="project" value="MGI"/>
</dbReference>
<dbReference type="GO" id="GO:0021987">
    <property type="term" value="P:cerebral cortex development"/>
    <property type="evidence" value="ECO:0000315"/>
    <property type="project" value="MGI"/>
</dbReference>
<dbReference type="GO" id="GO:0007268">
    <property type="term" value="P:chemical synaptic transmission"/>
    <property type="evidence" value="ECO:0000304"/>
    <property type="project" value="MGI"/>
</dbReference>
<dbReference type="GO" id="GO:0001661">
    <property type="term" value="P:conditioned taste aversion"/>
    <property type="evidence" value="ECO:0000315"/>
    <property type="project" value="MGI"/>
</dbReference>
<dbReference type="GO" id="GO:0060079">
    <property type="term" value="P:excitatory postsynaptic potential"/>
    <property type="evidence" value="ECO:0000315"/>
    <property type="project" value="MGI"/>
</dbReference>
<dbReference type="GO" id="GO:0006874">
    <property type="term" value="P:intracellular calcium ion homeostasis"/>
    <property type="evidence" value="ECO:0000315"/>
    <property type="project" value="MGI"/>
</dbReference>
<dbReference type="GO" id="GO:0035235">
    <property type="term" value="P:ionotropic glutamate receptor signaling pathway"/>
    <property type="evidence" value="ECO:0000314"/>
    <property type="project" value="MGI"/>
</dbReference>
<dbReference type="GO" id="GO:0007612">
    <property type="term" value="P:learning"/>
    <property type="evidence" value="ECO:0000315"/>
    <property type="project" value="MGI"/>
</dbReference>
<dbReference type="GO" id="GO:0007611">
    <property type="term" value="P:learning or memory"/>
    <property type="evidence" value="ECO:0000315"/>
    <property type="project" value="MGI"/>
</dbReference>
<dbReference type="GO" id="GO:0007616">
    <property type="term" value="P:long-term memory"/>
    <property type="evidence" value="ECO:0000315"/>
    <property type="project" value="MGI"/>
</dbReference>
<dbReference type="GO" id="GO:0060179">
    <property type="term" value="P:male mating behavior"/>
    <property type="evidence" value="ECO:0000315"/>
    <property type="project" value="MGI"/>
</dbReference>
<dbReference type="GO" id="GO:0007613">
    <property type="term" value="P:memory"/>
    <property type="evidence" value="ECO:0000315"/>
    <property type="project" value="MGI"/>
</dbReference>
<dbReference type="GO" id="GO:0098655">
    <property type="term" value="P:monoatomic cation transmembrane transport"/>
    <property type="evidence" value="ECO:0000266"/>
    <property type="project" value="ComplexPortal"/>
</dbReference>
<dbReference type="GO" id="GO:0006812">
    <property type="term" value="P:monoatomic cation transport"/>
    <property type="evidence" value="ECO:0000316"/>
    <property type="project" value="MGI"/>
</dbReference>
<dbReference type="GO" id="GO:0043524">
    <property type="term" value="P:negative regulation of neuron apoptotic process"/>
    <property type="evidence" value="ECO:0000315"/>
    <property type="project" value="MGI"/>
</dbReference>
<dbReference type="GO" id="GO:0050905">
    <property type="term" value="P:neuromuscular process"/>
    <property type="evidence" value="ECO:0000315"/>
    <property type="project" value="MGI"/>
</dbReference>
<dbReference type="GO" id="GO:0070050">
    <property type="term" value="P:neuron cellular homeostasis"/>
    <property type="evidence" value="ECO:0000315"/>
    <property type="project" value="MGI"/>
</dbReference>
<dbReference type="GO" id="GO:0008355">
    <property type="term" value="P:olfactory learning"/>
    <property type="evidence" value="ECO:0000315"/>
    <property type="project" value="MGI"/>
</dbReference>
<dbReference type="GO" id="GO:0021586">
    <property type="term" value="P:pons maturation"/>
    <property type="evidence" value="ECO:0000315"/>
    <property type="project" value="MGI"/>
</dbReference>
<dbReference type="GO" id="GO:0043065">
    <property type="term" value="P:positive regulation of apoptotic process"/>
    <property type="evidence" value="ECO:0000316"/>
    <property type="project" value="MGI"/>
</dbReference>
<dbReference type="GO" id="GO:2000463">
    <property type="term" value="P:positive regulation of excitatory postsynaptic potential"/>
    <property type="evidence" value="ECO:0000266"/>
    <property type="project" value="ComplexPortal"/>
</dbReference>
<dbReference type="GO" id="GO:0051968">
    <property type="term" value="P:positive regulation of synaptic transmission, glutamatergic"/>
    <property type="evidence" value="ECO:0000266"/>
    <property type="project" value="ComplexPortal"/>
</dbReference>
<dbReference type="GO" id="GO:0045944">
    <property type="term" value="P:positive regulation of transcription by RNA polymerase II"/>
    <property type="evidence" value="ECO:0000314"/>
    <property type="project" value="MGI"/>
</dbReference>
<dbReference type="GO" id="GO:0060134">
    <property type="term" value="P:prepulse inhibition"/>
    <property type="evidence" value="ECO:0000315"/>
    <property type="project" value="MGI"/>
</dbReference>
<dbReference type="GO" id="GO:0018964">
    <property type="term" value="P:propylene metabolic process"/>
    <property type="evidence" value="ECO:0000314"/>
    <property type="project" value="BHF-UCL"/>
</dbReference>
<dbReference type="GO" id="GO:0051290">
    <property type="term" value="P:protein heterotetramerization"/>
    <property type="evidence" value="ECO:0000250"/>
    <property type="project" value="UniProtKB"/>
</dbReference>
<dbReference type="GO" id="GO:1903539">
    <property type="term" value="P:protein localization to postsynaptic membrane"/>
    <property type="evidence" value="ECO:0000315"/>
    <property type="project" value="MGI"/>
</dbReference>
<dbReference type="GO" id="GO:0050770">
    <property type="term" value="P:regulation of axonogenesis"/>
    <property type="evidence" value="ECO:0000315"/>
    <property type="project" value="MGI"/>
</dbReference>
<dbReference type="GO" id="GO:0010646">
    <property type="term" value="P:regulation of cell communication"/>
    <property type="evidence" value="ECO:0000315"/>
    <property type="project" value="MGI"/>
</dbReference>
<dbReference type="GO" id="GO:0048814">
    <property type="term" value="P:regulation of dendrite morphogenesis"/>
    <property type="evidence" value="ECO:0000315"/>
    <property type="project" value="MGI"/>
</dbReference>
<dbReference type="GO" id="GO:0048169">
    <property type="term" value="P:regulation of long-term neuronal synaptic plasticity"/>
    <property type="evidence" value="ECO:0000315"/>
    <property type="project" value="MGI"/>
</dbReference>
<dbReference type="GO" id="GO:0042391">
    <property type="term" value="P:regulation of membrane potential"/>
    <property type="evidence" value="ECO:0000314"/>
    <property type="project" value="MGI"/>
</dbReference>
<dbReference type="GO" id="GO:1904062">
    <property type="term" value="P:regulation of monoatomic cation transmembrane transport"/>
    <property type="evidence" value="ECO:0000266"/>
    <property type="project" value="ComplexPortal"/>
</dbReference>
<dbReference type="GO" id="GO:0043523">
    <property type="term" value="P:regulation of neuron apoptotic process"/>
    <property type="evidence" value="ECO:0000315"/>
    <property type="project" value="MGI"/>
</dbReference>
<dbReference type="GO" id="GO:0048168">
    <property type="term" value="P:regulation of neuronal synaptic plasticity"/>
    <property type="evidence" value="ECO:0000315"/>
    <property type="project" value="MGI"/>
</dbReference>
<dbReference type="GO" id="GO:0043576">
    <property type="term" value="P:regulation of respiratory gaseous exchange"/>
    <property type="evidence" value="ECO:0000315"/>
    <property type="project" value="MGI"/>
</dbReference>
<dbReference type="GO" id="GO:0051963">
    <property type="term" value="P:regulation of synapse assembly"/>
    <property type="evidence" value="ECO:0000315"/>
    <property type="project" value="MGI"/>
</dbReference>
<dbReference type="GO" id="GO:0048167">
    <property type="term" value="P:regulation of synaptic plasticity"/>
    <property type="evidence" value="ECO:0000314"/>
    <property type="project" value="UniProtKB"/>
</dbReference>
<dbReference type="GO" id="GO:0001975">
    <property type="term" value="P:response to amphetamine"/>
    <property type="evidence" value="ECO:0000315"/>
    <property type="project" value="MGI"/>
</dbReference>
<dbReference type="GO" id="GO:0043278">
    <property type="term" value="P:response to morphine"/>
    <property type="evidence" value="ECO:0000315"/>
    <property type="project" value="MGI"/>
</dbReference>
<dbReference type="GO" id="GO:0019233">
    <property type="term" value="P:sensory perception of pain"/>
    <property type="evidence" value="ECO:0000315"/>
    <property type="project" value="MGI"/>
</dbReference>
<dbReference type="GO" id="GO:0035176">
    <property type="term" value="P:social behavior"/>
    <property type="evidence" value="ECO:0000315"/>
    <property type="project" value="MGI"/>
</dbReference>
<dbReference type="GO" id="GO:0035725">
    <property type="term" value="P:sodium ion transmembrane transport"/>
    <property type="evidence" value="ECO:0000250"/>
    <property type="project" value="UniProtKB"/>
</dbReference>
<dbReference type="GO" id="GO:0001964">
    <property type="term" value="P:startle response"/>
    <property type="evidence" value="ECO:0000315"/>
    <property type="project" value="MGI"/>
</dbReference>
<dbReference type="GO" id="GO:0001967">
    <property type="term" value="P:suckling behavior"/>
    <property type="evidence" value="ECO:0000315"/>
    <property type="project" value="MGI"/>
</dbReference>
<dbReference type="GO" id="GO:0035249">
    <property type="term" value="P:synaptic transmission, glutamatergic"/>
    <property type="evidence" value="ECO:0000315"/>
    <property type="project" value="MGI"/>
</dbReference>
<dbReference type="GO" id="GO:0006366">
    <property type="term" value="P:transcription by RNA polymerase II"/>
    <property type="evidence" value="ECO:0000314"/>
    <property type="project" value="MGI"/>
</dbReference>
<dbReference type="GO" id="GO:0008542">
    <property type="term" value="P:visual learning"/>
    <property type="evidence" value="ECO:0000315"/>
    <property type="project" value="MGI"/>
</dbReference>
<dbReference type="CDD" id="cd06379">
    <property type="entry name" value="PBP1_iGluR_NMDA_NR1"/>
    <property type="match status" value="1"/>
</dbReference>
<dbReference type="CDD" id="cd13719">
    <property type="entry name" value="PBP2_iGluR_NMDA_Nr1"/>
    <property type="match status" value="1"/>
</dbReference>
<dbReference type="FunFam" id="3.40.190.10:FF:000010">
    <property type="entry name" value="glutamate receptor ionotropic, NMDA 1 isoform X1"/>
    <property type="match status" value="1"/>
</dbReference>
<dbReference type="FunFam" id="3.40.50.2300:FF:000025">
    <property type="entry name" value="glutamate receptor ionotropic, NMDA 1 isoform X1"/>
    <property type="match status" value="1"/>
</dbReference>
<dbReference type="FunFam" id="3.40.190.10:FF:000012">
    <property type="entry name" value="glutamate receptor ionotropic, NMDA 1 isoform X2"/>
    <property type="match status" value="1"/>
</dbReference>
<dbReference type="FunFam" id="3.40.50.2300:FF:000053">
    <property type="entry name" value="glutamate receptor ionotropic, NMDA 1 isoform X2"/>
    <property type="match status" value="1"/>
</dbReference>
<dbReference type="FunFam" id="3.40.190.10:FF:000025">
    <property type="entry name" value="glutamate receptor ionotropic, NMDA 1 isoform X3"/>
    <property type="match status" value="1"/>
</dbReference>
<dbReference type="FunFam" id="1.10.287.70:FF:000087">
    <property type="entry name" value="glutamate receptor ionotropic, NMDA 1 isoform X4"/>
    <property type="match status" value="1"/>
</dbReference>
<dbReference type="Gene3D" id="3.40.50.2300">
    <property type="match status" value="2"/>
</dbReference>
<dbReference type="Gene3D" id="3.40.190.10">
    <property type="entry name" value="Periplasmic binding protein-like II"/>
    <property type="match status" value="3"/>
</dbReference>
<dbReference type="InterPro" id="IPR001828">
    <property type="entry name" value="ANF_lig-bd_rcpt"/>
</dbReference>
<dbReference type="InterPro" id="IPR019594">
    <property type="entry name" value="Glu/Gly-bd"/>
</dbReference>
<dbReference type="InterPro" id="IPR001508">
    <property type="entry name" value="Iono_Glu_rcpt_met"/>
</dbReference>
<dbReference type="InterPro" id="IPR015683">
    <property type="entry name" value="Ionotropic_Glu_rcpt"/>
</dbReference>
<dbReference type="InterPro" id="IPR001320">
    <property type="entry name" value="Iontro_rcpt_C"/>
</dbReference>
<dbReference type="InterPro" id="IPR049872">
    <property type="entry name" value="NMDA1-like_ligand-bd"/>
</dbReference>
<dbReference type="InterPro" id="IPR049873">
    <property type="entry name" value="NMDA1-like_N"/>
</dbReference>
<dbReference type="InterPro" id="IPR028082">
    <property type="entry name" value="Peripla_BP_I"/>
</dbReference>
<dbReference type="PANTHER" id="PTHR18966">
    <property type="entry name" value="IONOTROPIC GLUTAMATE RECEPTOR"/>
    <property type="match status" value="1"/>
</dbReference>
<dbReference type="Pfam" id="PF01094">
    <property type="entry name" value="ANF_receptor"/>
    <property type="match status" value="1"/>
</dbReference>
<dbReference type="Pfam" id="PF00060">
    <property type="entry name" value="Lig_chan"/>
    <property type="match status" value="1"/>
</dbReference>
<dbReference type="Pfam" id="PF10613">
    <property type="entry name" value="Lig_chan-Glu_bd"/>
    <property type="match status" value="1"/>
</dbReference>
<dbReference type="PRINTS" id="PR00177">
    <property type="entry name" value="NMDARECEPTOR"/>
</dbReference>
<dbReference type="SMART" id="SM00918">
    <property type="entry name" value="Lig_chan-Glu_bd"/>
    <property type="match status" value="1"/>
</dbReference>
<dbReference type="SMART" id="SM00079">
    <property type="entry name" value="PBPe"/>
    <property type="match status" value="1"/>
</dbReference>
<dbReference type="SUPFAM" id="SSF53822">
    <property type="entry name" value="Periplasmic binding protein-like I"/>
    <property type="match status" value="1"/>
</dbReference>
<dbReference type="SUPFAM" id="SSF53850">
    <property type="entry name" value="Periplasmic binding protein-like II"/>
    <property type="match status" value="1"/>
</dbReference>
<dbReference type="SUPFAM" id="SSF81324">
    <property type="entry name" value="Voltage-gated potassium channels"/>
    <property type="match status" value="1"/>
</dbReference>
<keyword id="KW-0002">3D-structure</keyword>
<keyword id="KW-0025">Alternative splicing</keyword>
<keyword id="KW-0106">Calcium</keyword>
<keyword id="KW-1003">Cell membrane</keyword>
<keyword id="KW-1015">Disulfide bond</keyword>
<keyword id="KW-0325">Glycoprotein</keyword>
<keyword id="KW-0407">Ion channel</keyword>
<keyword id="KW-0406">Ion transport</keyword>
<keyword id="KW-1071">Ligand-gated ion channel</keyword>
<keyword id="KW-0460">Magnesium</keyword>
<keyword id="KW-0472">Membrane</keyword>
<keyword id="KW-0479">Metal-binding</keyword>
<keyword id="KW-0597">Phosphoprotein</keyword>
<keyword id="KW-0628">Postsynaptic cell membrane</keyword>
<keyword id="KW-0675">Receptor</keyword>
<keyword id="KW-1185">Reference proteome</keyword>
<keyword id="KW-0732">Signal</keyword>
<keyword id="KW-0770">Synapse</keyword>
<keyword id="KW-0812">Transmembrane</keyword>
<keyword id="KW-1133">Transmembrane helix</keyword>
<keyword id="KW-0813">Transport</keyword>
<keyword id="KW-0862">Zinc</keyword>
<protein>
    <recommendedName>
        <fullName evidence="20">Glutamate receptor ionotropic, NMDA 1</fullName>
        <shortName>GluN1</shortName>
    </recommendedName>
    <alternativeName>
        <fullName>Glutamate [NMDA] receptor subunit zeta-1</fullName>
    </alternativeName>
    <alternativeName>
        <fullName>N-methyl-D-aspartate receptor subunit NR1</fullName>
        <shortName>NMD-R1</shortName>
    </alternativeName>
</protein>
<proteinExistence type="evidence at protein level"/>
<reference key="1">
    <citation type="journal article" date="1992" name="FEBS Lett.">
        <title>Cloning, expression and modulation of a mouse NMDA receptor subunit.</title>
        <authorList>
            <person name="Yamazaki M."/>
            <person name="Mori H."/>
            <person name="Araki K."/>
            <person name="Mori K.J."/>
            <person name="Mishina M."/>
        </authorList>
    </citation>
    <scope>NUCLEOTIDE SEQUENCE [MRNA] (ISOFORM 1)</scope>
    <scope>FUNCTION</scope>
    <scope>TRANSPORTER ACTIVITY</scope>
    <scope>SUBCELLULAR LOCATION</scope>
</reference>
<reference key="2">
    <citation type="journal article" date="2009" name="PLoS Biol.">
        <title>Lineage-specific biology revealed by a finished genome assembly of the mouse.</title>
        <authorList>
            <person name="Church D.M."/>
            <person name="Goodstadt L."/>
            <person name="Hillier L.W."/>
            <person name="Zody M.C."/>
            <person name="Goldstein S."/>
            <person name="She X."/>
            <person name="Bult C.J."/>
            <person name="Agarwala R."/>
            <person name="Cherry J.L."/>
            <person name="DiCuccio M."/>
            <person name="Hlavina W."/>
            <person name="Kapustin Y."/>
            <person name="Meric P."/>
            <person name="Maglott D."/>
            <person name="Birtle Z."/>
            <person name="Marques A.C."/>
            <person name="Graves T."/>
            <person name="Zhou S."/>
            <person name="Teague B."/>
            <person name="Potamousis K."/>
            <person name="Churas C."/>
            <person name="Place M."/>
            <person name="Herschleb J."/>
            <person name="Runnheim R."/>
            <person name="Forrest D."/>
            <person name="Amos-Landgraf J."/>
            <person name="Schwartz D.C."/>
            <person name="Cheng Z."/>
            <person name="Lindblad-Toh K."/>
            <person name="Eichler E.E."/>
            <person name="Ponting C.P."/>
        </authorList>
    </citation>
    <scope>NUCLEOTIDE SEQUENCE [LARGE SCALE GENOMIC DNA]</scope>
    <source>
        <strain>C57BL/6J</strain>
    </source>
</reference>
<reference key="3">
    <citation type="journal article" date="2004" name="Genome Res.">
        <title>The status, quality, and expansion of the NIH full-length cDNA project: the Mammalian Gene Collection (MGC).</title>
        <authorList>
            <consortium name="The MGC Project Team"/>
        </authorList>
    </citation>
    <scope>NUCLEOTIDE SEQUENCE [LARGE SCALE MRNA] (ISOFORM 2)</scope>
    <source>
        <tissue>Eye</tissue>
    </source>
</reference>
<reference key="4">
    <citation type="journal article" date="1994" name="Neuron">
        <title>Targeted disruption of NMDA receptor 1 gene abolishes NMDA response and results in neonatal death.</title>
        <authorList>
            <person name="Forrest D."/>
            <person name="Yuzaki M."/>
            <person name="Soares H.D."/>
            <person name="Ng L."/>
            <person name="Luk D.C."/>
            <person name="Sheng M."/>
            <person name="Stewart C.L."/>
            <person name="Morgan J.I."/>
            <person name="Connor J.A."/>
            <person name="Curran T."/>
        </authorList>
    </citation>
    <scope>DISRUPTION PHENOTYPE</scope>
    <scope>FUNCTION</scope>
    <scope>TRANSPORTER ACTIVITY</scope>
    <scope>SUBCELLULAR LOCATION</scope>
    <scope>TISSUE SPECIFICITY</scope>
</reference>
<reference key="5">
    <citation type="journal article" date="1995" name="J. Neurochem.">
        <title>Functional comparison of D-serine and glycine in rodents: the effect on cloned NMDA receptors and the extracellular concentration.</title>
        <authorList>
            <person name="Matsui T."/>
            <person name="Sekiguchi M."/>
            <person name="Hashimoto A."/>
            <person name="Tomita U."/>
            <person name="Nishikawa T."/>
            <person name="Wada K."/>
        </authorList>
    </citation>
    <scope>FUNCTION</scope>
</reference>
<reference key="6">
    <citation type="journal article" date="1997" name="J. Membr. Biol.">
        <title>Permeation properties of Na+ and Ca2+ ions through the mouse epsilon2/zeta1 NMDA receptor channel expressed in Xenopus oocytes.</title>
        <authorList>
            <person name="Iino M."/>
            <person name="Ciani S."/>
            <person name="Tsuzuki K."/>
            <person name="Ozawa S."/>
            <person name="Kidokoro Y."/>
        </authorList>
    </citation>
    <scope>FUNCTION</scope>
    <scope>TRANSPORTER ACTIVITY</scope>
</reference>
<reference key="7">
    <citation type="journal article" date="2002" name="Brain Res. Mol. Brain Res.">
        <title>Cloning and characterization of a novel NMDA receptor subunit NR3B: a dominant subunit that reduces calcium permeability.</title>
        <authorList>
            <person name="Matsuda K."/>
            <person name="Kamiya Y."/>
            <person name="Matsuda S."/>
            <person name="Yuzaki M."/>
        </authorList>
    </citation>
    <scope>IDENTIFICATION IN A COMPLEX WITH GRIN2A OR GRIN2B AND GRIN3B</scope>
    <scope>FUNCTION</scope>
    <scope>TRANSPORTER ACTIVITY</scope>
    <scope>SUBCELLULAR LOCATION</scope>
    <scope>SUBUNIT</scope>
</reference>
<reference key="8">
    <citation type="journal article" date="2003" name="J. Neurosci.">
        <title>Specific assembly with the NMDA receptor 3B subunit controls surface expression and calcium permeability of NMDA receptors.</title>
        <authorList>
            <person name="Matsuda K."/>
            <person name="Fletcher M."/>
            <person name="Kamiya Y."/>
            <person name="Yuzaki M."/>
        </authorList>
    </citation>
    <scope>SUBCELLULAR LOCATION</scope>
    <scope>IDENTIFICATION IN A COMPLEX WITH GRIN2A OR GRIN2B AND GRIN3B</scope>
    <scope>FUNCTION</scope>
    <scope>TRANSPORTER ACTIVITY</scope>
</reference>
<reference key="9">
    <citation type="journal article" date="2003" name="J. Physiol. (Lond.)">
        <title>Ca2+-independent, but voltage- and activity-dependent regulation of the NMDA receptor outward K+ current in mouse cortical neurons.</title>
        <authorList>
            <person name="Ichinose T."/>
            <person name="Yu S."/>
            <person name="Wang X.Q."/>
            <person name="Yu S.P."/>
        </authorList>
    </citation>
    <scope>FUNCTION</scope>
    <scope>TRANSPORTER ACTIVITY</scope>
</reference>
<reference key="10">
    <citation type="journal article" date="2008" name="NeuroReport">
        <title>GRINL1A colocalizes with N-methyl D-aspartate receptor NR1 subunit and reduces N-methyl D-aspartate toxicity.</title>
        <authorList>
            <person name="Roginski R.S."/>
            <person name="Goubaeva F."/>
            <person name="Mikami M."/>
            <person name="Fried-Cassorla E."/>
            <person name="Nair M.R."/>
            <person name="Yang J."/>
        </authorList>
    </citation>
    <scope>INTERACTION WITH MYZAP</scope>
</reference>
<reference key="11">
    <citation type="journal article" date="2009" name="Pharmacol. Biochem. Behav.">
        <title>Mutant mice with reduced NMDA-NR1 glycine affinity or lack of D-amino acid oxidase function exhibit altered anxiety-like behaviors.</title>
        <authorList>
            <person name="Labrie V."/>
            <person name="Clapcote S.J."/>
            <person name="Roder J.C."/>
        </authorList>
    </citation>
    <scope>MUTAGENESIS OF ASP-481</scope>
</reference>
<reference key="12">
    <citation type="journal article" date="2010" name="Cell">
        <title>A tissue-specific atlas of mouse protein phosphorylation and expression.</title>
        <authorList>
            <person name="Huttlin E.L."/>
            <person name="Jedrychowski M.P."/>
            <person name="Elias J.E."/>
            <person name="Goswami T."/>
            <person name="Rad R."/>
            <person name="Beausoleil S.A."/>
            <person name="Villen J."/>
            <person name="Haas W."/>
            <person name="Sowa M.E."/>
            <person name="Gygi S.P."/>
        </authorList>
    </citation>
    <scope>IDENTIFICATION BY MASS SPECTROMETRY [LARGE SCALE ANALYSIS]</scope>
    <source>
        <tissue>Brain</tissue>
    </source>
</reference>
<reference key="13">
    <citation type="journal article" date="2010" name="Genes Brain Behav.">
        <title>Genetic loss of D-amino acid oxidase activity reverses schizophrenia-like phenotypes in mice.</title>
        <authorList>
            <person name="Labrie V."/>
            <person name="Wang W."/>
            <person name="Barger S.W."/>
            <person name="Baker G.B."/>
            <person name="Roder J.C."/>
        </authorList>
    </citation>
    <scope>MUTAGENESIS OF ASP-481</scope>
</reference>
<reference key="14">
    <citation type="journal article" date="2013" name="Nat. Med.">
        <title>Loss of sorting nexin 27 contributes to excitatory synaptic dysfunction by modulating glutamate receptor recycling in Down's syndrome.</title>
        <authorList>
            <person name="Wang X."/>
            <person name="Zhao Y."/>
            <person name="Zhang X."/>
            <person name="Badie H."/>
            <person name="Zhou Y."/>
            <person name="Mu Y."/>
            <person name="Loo L.S."/>
            <person name="Cai L."/>
            <person name="Thompson R.C."/>
            <person name="Yang B."/>
            <person name="Chen Y."/>
            <person name="Johnson P.F."/>
            <person name="Wu C."/>
            <person name="Bu G."/>
            <person name="Mobley W.C."/>
            <person name="Zhang D."/>
            <person name="Gage F.H."/>
            <person name="Ranscht B."/>
            <person name="Zhang Y.W."/>
            <person name="Lipton S.A."/>
            <person name="Hong W."/>
            <person name="Xu H."/>
        </authorList>
    </citation>
    <scope>INTERACTION WITH SNX27</scope>
</reference>
<reference key="15">
    <citation type="journal article" date="2015" name="J. Neurosci.">
        <title>GluN2B-Containing NMDA Receptors Regulate AMPA Receptor Traffic through Anchoring of the Synaptic Proteasome.</title>
        <authorList>
            <person name="Ferreira J.S."/>
            <person name="Schmidt J."/>
            <person name="Rio P."/>
            <person name="Aguas R."/>
            <person name="Rooyakkers A."/>
            <person name="Li K.W."/>
            <person name="Smit A.B."/>
            <person name="Craig A.M."/>
            <person name="Carvalho A.L."/>
        </authorList>
    </citation>
    <scope>SUBCELLULAR LOCATION</scope>
</reference>
<reference key="16">
    <citation type="journal article" date="2023" name="Brain Pathol.">
        <title>Different modes of synaptic and extrasynaptic NMDA receptor alteration in the hippocampus of P301S tau transgenic mice.</title>
        <authorList>
            <person name="Alfaro-Ruiz R."/>
            <person name="Aguado C."/>
            <person name="Martin-Belmonte A."/>
            <person name="Moreno-Martinez A.E."/>
            <person name="Merchan-Rubira J."/>
            <person name="Hernandez F."/>
            <person name="Avila J."/>
            <person name="Fukazawa Y."/>
            <person name="Lujan R."/>
        </authorList>
    </citation>
    <scope>SUBCELLULAR LOCATION</scope>
</reference>
<evidence type="ECO:0000250" key="1">
    <source>
        <dbReference type="UniProtKB" id="A0A1L8F5J9"/>
    </source>
</evidence>
<evidence type="ECO:0000250" key="2">
    <source>
        <dbReference type="UniProtKB" id="P35439"/>
    </source>
</evidence>
<evidence type="ECO:0000250" key="3">
    <source>
        <dbReference type="UniProtKB" id="Q05586"/>
    </source>
</evidence>
<evidence type="ECO:0000255" key="4"/>
<evidence type="ECO:0000256" key="5">
    <source>
        <dbReference type="SAM" id="MobiDB-lite"/>
    </source>
</evidence>
<evidence type="ECO:0000269" key="6">
    <source>
    </source>
</evidence>
<evidence type="ECO:0000269" key="7">
    <source>
    </source>
</evidence>
<evidence type="ECO:0000269" key="8">
    <source>
    </source>
</evidence>
<evidence type="ECO:0000269" key="9">
    <source>
    </source>
</evidence>
<evidence type="ECO:0000269" key="10">
    <source>
    </source>
</evidence>
<evidence type="ECO:0000269" key="11">
    <source>
    </source>
</evidence>
<evidence type="ECO:0000269" key="12">
    <source>
    </source>
</evidence>
<evidence type="ECO:0000269" key="13">
    <source>
    </source>
</evidence>
<evidence type="ECO:0000269" key="14">
    <source>
    </source>
</evidence>
<evidence type="ECO:0000269" key="15">
    <source>
    </source>
</evidence>
<evidence type="ECO:0000269" key="16">
    <source>
    </source>
</evidence>
<evidence type="ECO:0000269" key="17">
    <source>
    </source>
</evidence>
<evidence type="ECO:0000269" key="18">
    <source>
    </source>
</evidence>
<evidence type="ECO:0000303" key="19">
    <source>
    </source>
</evidence>
<evidence type="ECO:0000305" key="20"/>
<evidence type="ECO:0000312" key="21">
    <source>
        <dbReference type="MGI" id="MGI:95819"/>
    </source>
</evidence>
<sequence length="938" mass="105481">MSTMHLLTFALLFSCSFARAACDPKIVNIGAVLSTRKHEQMFREAVNQANKRHGSWKIQLNATSVTHKPNAIQMALSVCEDLISSQVYAILVSHPPTPNDHFTPTPVSYTAGFYRIPVLGLTTRMSIYSDKSIHLSFLRTVPPYSHQSSVWFEMMRVYNWNHIILLVSDDHEGRAAQKRLETLLEERESKAEKVLQFDPGTKNVTALLMEARDLEARVIILSASEDDAATVYRAAAMLNMTGSGYVWLVGEREISGNALRYAPDGIIGLQLINGKNESAHISDAVGVVAQAVHELLEKENITDPPRGCVGNTNIWKTGPLFKRVLMSSKYADGVTGRVEFNEDGDRKFANYSIMNLQNRKLVQVGIYNGTHVIPNDRKIIWPGGETEKPRGYQMSTRLKIVTIHQEPFVYVKPTMSDGTCKEEFTVNGDPVKKVICTGPNDTSPGSPRHTVPQCCYGFCVDLLIKLARTMNFTYEVHLVADGKFGTQERVNNSNKKEWNGMMGELLSGQADMIVAPLTINNERAQYIEFSKPFKYQGLTILVKKEIPRSTLDSFMQPFQSTLWLLVGLSVHVVAVMLYLLDRFSPFGRFKVNSEEEEEDALTLSSAMWFSWGVLLNSGIGEGAPRSFSARILGMVWAGFAMIIVASYTANLAAFLVLDRPEERITGINDPRLRNPSDKFIYATVKQSSVDIYFRRQVELSTMYRHMEKHNYESAAEAIQAVRDNKLHAFIWDSAVLEFEASQKCDLVTTGELFFRSGFGIGMRKDSPWKQNVSLSILKSHENGFMEDLDKTWVRYQECDSRSNAPATLTFENMAGVFMLVAGGIVAGIFLIFIEIAYKRHKDARRKQMQLAFAAVNVWRKNLQDRKSGRAEPDPKKKATFRAITSTLASSFKRRRSSKDTSTGGGRGALQNQKDTVLPRRAIEREEGQLQLCSRHRES</sequence>
<accession>P35438</accession>
<accession>A2AI15</accession>
<accession>A2AI18</accession>
<accession>Q8CFS4</accession>